<protein>
    <recommendedName>
        <fullName evidence="1">Large ribosomal subunit protein bL32</fullName>
    </recommendedName>
    <alternativeName>
        <fullName evidence="3">50S ribosomal protein L32</fullName>
    </alternativeName>
</protein>
<feature type="chain" id="PRO_0000172350" description="Large ribosomal subunit protein bL32">
    <location>
        <begin position="1"/>
        <end position="63"/>
    </location>
</feature>
<feature type="region of interest" description="Disordered" evidence="2">
    <location>
        <begin position="1"/>
        <end position="25"/>
    </location>
</feature>
<feature type="region of interest" description="Disordered" evidence="2">
    <location>
        <begin position="42"/>
        <end position="63"/>
    </location>
</feature>
<feature type="compositionally biased region" description="Basic residues" evidence="2">
    <location>
        <begin position="7"/>
        <end position="20"/>
    </location>
</feature>
<feature type="compositionally biased region" description="Polar residues" evidence="2">
    <location>
        <begin position="54"/>
        <end position="63"/>
    </location>
</feature>
<evidence type="ECO:0000255" key="1">
    <source>
        <dbReference type="HAMAP-Rule" id="MF_00340"/>
    </source>
</evidence>
<evidence type="ECO:0000256" key="2">
    <source>
        <dbReference type="SAM" id="MobiDB-lite"/>
    </source>
</evidence>
<evidence type="ECO:0000305" key="3"/>
<organism>
    <name type="scientific">Lactobacillus johnsonii (strain CNCM I-12250 / La1 / NCC 533)</name>
    <dbReference type="NCBI Taxonomy" id="257314"/>
    <lineage>
        <taxon>Bacteria</taxon>
        <taxon>Bacillati</taxon>
        <taxon>Bacillota</taxon>
        <taxon>Bacilli</taxon>
        <taxon>Lactobacillales</taxon>
        <taxon>Lactobacillaceae</taxon>
        <taxon>Lactobacillus</taxon>
    </lineage>
</organism>
<accession>Q74JN2</accession>
<proteinExistence type="inferred from homology"/>
<comment type="similarity">
    <text evidence="1">Belongs to the bacterial ribosomal protein bL32 family.</text>
</comment>
<sequence>MAVPARKTSKQKKRSRRGHIKLTTPAMHYDATTGEYRLSHRVSPKGFYKGRQVANENKQQNND</sequence>
<name>RL32_LACJO</name>
<reference key="1">
    <citation type="journal article" date="2004" name="Proc. Natl. Acad. Sci. U.S.A.">
        <title>The genome sequence of the probiotic intestinal bacterium Lactobacillus johnsonii NCC 533.</title>
        <authorList>
            <person name="Pridmore R.D."/>
            <person name="Berger B."/>
            <person name="Desiere F."/>
            <person name="Vilanova D."/>
            <person name="Barretto C."/>
            <person name="Pittet A.-C."/>
            <person name="Zwahlen M.-C."/>
            <person name="Rouvet M."/>
            <person name="Altermann E."/>
            <person name="Barrangou R."/>
            <person name="Mollet B."/>
            <person name="Mercenier A."/>
            <person name="Klaenhammer T."/>
            <person name="Arigoni F."/>
            <person name="Schell M.A."/>
        </authorList>
    </citation>
    <scope>NUCLEOTIDE SEQUENCE [LARGE SCALE GENOMIC DNA]</scope>
    <source>
        <strain>CNCM I-1225 / La1 / NCC 533</strain>
    </source>
</reference>
<gene>
    <name evidence="1" type="primary">rpmF</name>
    <name type="ordered locus">LJ_1075.1</name>
    <name type="ORF">LJ_1075b</name>
</gene>
<dbReference type="EMBL" id="AE017198">
    <property type="protein sequence ID" value="AAS08897.1"/>
    <property type="molecule type" value="Genomic_DNA"/>
</dbReference>
<dbReference type="RefSeq" id="WP_004894461.1">
    <property type="nucleotide sequence ID" value="NC_005362.1"/>
</dbReference>
<dbReference type="SMR" id="Q74JN2"/>
<dbReference type="GeneID" id="83570486"/>
<dbReference type="KEGG" id="ljo:LJ_1075b"/>
<dbReference type="eggNOG" id="COG0333">
    <property type="taxonomic scope" value="Bacteria"/>
</dbReference>
<dbReference type="HOGENOM" id="CLU_129084_2_1_9"/>
<dbReference type="Proteomes" id="UP000000581">
    <property type="component" value="Chromosome"/>
</dbReference>
<dbReference type="GO" id="GO:0015934">
    <property type="term" value="C:large ribosomal subunit"/>
    <property type="evidence" value="ECO:0007669"/>
    <property type="project" value="InterPro"/>
</dbReference>
<dbReference type="GO" id="GO:0003735">
    <property type="term" value="F:structural constituent of ribosome"/>
    <property type="evidence" value="ECO:0007669"/>
    <property type="project" value="InterPro"/>
</dbReference>
<dbReference type="GO" id="GO:0006412">
    <property type="term" value="P:translation"/>
    <property type="evidence" value="ECO:0007669"/>
    <property type="project" value="UniProtKB-UniRule"/>
</dbReference>
<dbReference type="HAMAP" id="MF_00340">
    <property type="entry name" value="Ribosomal_bL32"/>
    <property type="match status" value="1"/>
</dbReference>
<dbReference type="InterPro" id="IPR002677">
    <property type="entry name" value="Ribosomal_bL32"/>
</dbReference>
<dbReference type="InterPro" id="IPR044957">
    <property type="entry name" value="Ribosomal_bL32_bact"/>
</dbReference>
<dbReference type="InterPro" id="IPR011332">
    <property type="entry name" value="Ribosomal_zn-bd"/>
</dbReference>
<dbReference type="NCBIfam" id="TIGR01031">
    <property type="entry name" value="rpmF_bact"/>
    <property type="match status" value="1"/>
</dbReference>
<dbReference type="PANTHER" id="PTHR35534">
    <property type="entry name" value="50S RIBOSOMAL PROTEIN L32"/>
    <property type="match status" value="1"/>
</dbReference>
<dbReference type="PANTHER" id="PTHR35534:SF1">
    <property type="entry name" value="LARGE RIBOSOMAL SUBUNIT PROTEIN BL32"/>
    <property type="match status" value="1"/>
</dbReference>
<dbReference type="Pfam" id="PF01783">
    <property type="entry name" value="Ribosomal_L32p"/>
    <property type="match status" value="1"/>
</dbReference>
<dbReference type="SUPFAM" id="SSF57829">
    <property type="entry name" value="Zn-binding ribosomal proteins"/>
    <property type="match status" value="1"/>
</dbReference>
<keyword id="KW-0687">Ribonucleoprotein</keyword>
<keyword id="KW-0689">Ribosomal protein</keyword>